<dbReference type="EC" id="4.3.2.1" evidence="1"/>
<dbReference type="EMBL" id="CP001390">
    <property type="protein sequence ID" value="ACM19487.1"/>
    <property type="molecule type" value="Genomic_DNA"/>
</dbReference>
<dbReference type="RefSeq" id="WP_012646216.1">
    <property type="nucleotide sequence ID" value="NC_011979.1"/>
</dbReference>
<dbReference type="SMR" id="B9M377"/>
<dbReference type="STRING" id="316067.Geob_1127"/>
<dbReference type="KEGG" id="geo:Geob_1127"/>
<dbReference type="eggNOG" id="COG0165">
    <property type="taxonomic scope" value="Bacteria"/>
</dbReference>
<dbReference type="HOGENOM" id="CLU_027272_2_3_7"/>
<dbReference type="OrthoDB" id="9769623at2"/>
<dbReference type="UniPathway" id="UPA00068">
    <property type="reaction ID" value="UER00114"/>
</dbReference>
<dbReference type="Proteomes" id="UP000007721">
    <property type="component" value="Chromosome"/>
</dbReference>
<dbReference type="GO" id="GO:0005829">
    <property type="term" value="C:cytosol"/>
    <property type="evidence" value="ECO:0007669"/>
    <property type="project" value="TreeGrafter"/>
</dbReference>
<dbReference type="GO" id="GO:0004056">
    <property type="term" value="F:argininosuccinate lyase activity"/>
    <property type="evidence" value="ECO:0007669"/>
    <property type="project" value="UniProtKB-UniRule"/>
</dbReference>
<dbReference type="GO" id="GO:0042450">
    <property type="term" value="P:arginine biosynthetic process via ornithine"/>
    <property type="evidence" value="ECO:0007669"/>
    <property type="project" value="InterPro"/>
</dbReference>
<dbReference type="GO" id="GO:0006526">
    <property type="term" value="P:L-arginine biosynthetic process"/>
    <property type="evidence" value="ECO:0007669"/>
    <property type="project" value="UniProtKB-UniRule"/>
</dbReference>
<dbReference type="CDD" id="cd01359">
    <property type="entry name" value="Argininosuccinate_lyase"/>
    <property type="match status" value="1"/>
</dbReference>
<dbReference type="FunFam" id="1.10.275.10:FF:000002">
    <property type="entry name" value="Argininosuccinate lyase"/>
    <property type="match status" value="1"/>
</dbReference>
<dbReference type="FunFam" id="1.10.40.30:FF:000001">
    <property type="entry name" value="Argininosuccinate lyase"/>
    <property type="match status" value="1"/>
</dbReference>
<dbReference type="FunFam" id="1.20.200.10:FF:000006">
    <property type="entry name" value="Argininosuccinate lyase"/>
    <property type="match status" value="1"/>
</dbReference>
<dbReference type="Gene3D" id="1.10.40.30">
    <property type="entry name" value="Fumarase/aspartase (C-terminal domain)"/>
    <property type="match status" value="1"/>
</dbReference>
<dbReference type="Gene3D" id="1.20.200.10">
    <property type="entry name" value="Fumarase/aspartase (Central domain)"/>
    <property type="match status" value="1"/>
</dbReference>
<dbReference type="Gene3D" id="1.10.275.10">
    <property type="entry name" value="Fumarase/aspartase (N-terminal domain)"/>
    <property type="match status" value="1"/>
</dbReference>
<dbReference type="HAMAP" id="MF_00006">
    <property type="entry name" value="Arg_succ_lyase"/>
    <property type="match status" value="1"/>
</dbReference>
<dbReference type="InterPro" id="IPR029419">
    <property type="entry name" value="Arg_succ_lyase_C"/>
</dbReference>
<dbReference type="InterPro" id="IPR009049">
    <property type="entry name" value="Argininosuccinate_lyase"/>
</dbReference>
<dbReference type="InterPro" id="IPR024083">
    <property type="entry name" value="Fumarase/histidase_N"/>
</dbReference>
<dbReference type="InterPro" id="IPR020557">
    <property type="entry name" value="Fumarate_lyase_CS"/>
</dbReference>
<dbReference type="InterPro" id="IPR000362">
    <property type="entry name" value="Fumarate_lyase_fam"/>
</dbReference>
<dbReference type="InterPro" id="IPR022761">
    <property type="entry name" value="Fumarate_lyase_N"/>
</dbReference>
<dbReference type="InterPro" id="IPR008948">
    <property type="entry name" value="L-Aspartase-like"/>
</dbReference>
<dbReference type="NCBIfam" id="TIGR00838">
    <property type="entry name" value="argH"/>
    <property type="match status" value="1"/>
</dbReference>
<dbReference type="PANTHER" id="PTHR43814">
    <property type="entry name" value="ARGININOSUCCINATE LYASE"/>
    <property type="match status" value="1"/>
</dbReference>
<dbReference type="PANTHER" id="PTHR43814:SF1">
    <property type="entry name" value="ARGININOSUCCINATE LYASE"/>
    <property type="match status" value="1"/>
</dbReference>
<dbReference type="Pfam" id="PF14698">
    <property type="entry name" value="ASL_C2"/>
    <property type="match status" value="1"/>
</dbReference>
<dbReference type="Pfam" id="PF00206">
    <property type="entry name" value="Lyase_1"/>
    <property type="match status" value="1"/>
</dbReference>
<dbReference type="PRINTS" id="PR00145">
    <property type="entry name" value="ARGSUCLYASE"/>
</dbReference>
<dbReference type="PRINTS" id="PR00149">
    <property type="entry name" value="FUMRATELYASE"/>
</dbReference>
<dbReference type="SUPFAM" id="SSF48557">
    <property type="entry name" value="L-aspartase-like"/>
    <property type="match status" value="1"/>
</dbReference>
<dbReference type="PROSITE" id="PS00163">
    <property type="entry name" value="FUMARATE_LYASES"/>
    <property type="match status" value="1"/>
</dbReference>
<reference key="1">
    <citation type="submission" date="2009-01" db="EMBL/GenBank/DDBJ databases">
        <title>Complete sequence of Geobacter sp. FRC-32.</title>
        <authorList>
            <consortium name="US DOE Joint Genome Institute"/>
            <person name="Lucas S."/>
            <person name="Copeland A."/>
            <person name="Lapidus A."/>
            <person name="Glavina del Rio T."/>
            <person name="Dalin E."/>
            <person name="Tice H."/>
            <person name="Bruce D."/>
            <person name="Goodwin L."/>
            <person name="Pitluck S."/>
            <person name="Saunders E."/>
            <person name="Brettin T."/>
            <person name="Detter J.C."/>
            <person name="Han C."/>
            <person name="Larimer F."/>
            <person name="Land M."/>
            <person name="Hauser L."/>
            <person name="Kyrpides N."/>
            <person name="Ovchinnikova G."/>
            <person name="Kostka J."/>
            <person name="Richardson P."/>
        </authorList>
    </citation>
    <scope>NUCLEOTIDE SEQUENCE [LARGE SCALE GENOMIC DNA]</scope>
    <source>
        <strain>DSM 22248 / JCM 15807 / FRC-32</strain>
    </source>
</reference>
<organism>
    <name type="scientific">Geotalea daltonii (strain DSM 22248 / JCM 15807 / FRC-32)</name>
    <name type="common">Geobacter daltonii</name>
    <dbReference type="NCBI Taxonomy" id="316067"/>
    <lineage>
        <taxon>Bacteria</taxon>
        <taxon>Pseudomonadati</taxon>
        <taxon>Thermodesulfobacteriota</taxon>
        <taxon>Desulfuromonadia</taxon>
        <taxon>Geobacterales</taxon>
        <taxon>Geobacteraceae</taxon>
        <taxon>Geotalea</taxon>
    </lineage>
</organism>
<proteinExistence type="inferred from homology"/>
<comment type="catalytic activity">
    <reaction evidence="1">
        <text>2-(N(omega)-L-arginino)succinate = fumarate + L-arginine</text>
        <dbReference type="Rhea" id="RHEA:24020"/>
        <dbReference type="ChEBI" id="CHEBI:29806"/>
        <dbReference type="ChEBI" id="CHEBI:32682"/>
        <dbReference type="ChEBI" id="CHEBI:57472"/>
        <dbReference type="EC" id="4.3.2.1"/>
    </reaction>
</comment>
<comment type="pathway">
    <text evidence="1">Amino-acid biosynthesis; L-arginine biosynthesis; L-arginine from L-ornithine and carbamoyl phosphate: step 3/3.</text>
</comment>
<comment type="subcellular location">
    <subcellularLocation>
        <location evidence="1">Cytoplasm</location>
    </subcellularLocation>
</comment>
<comment type="similarity">
    <text evidence="1">Belongs to the lyase 1 family. Argininosuccinate lyase subfamily.</text>
</comment>
<accession>B9M377</accession>
<keyword id="KW-0028">Amino-acid biosynthesis</keyword>
<keyword id="KW-0055">Arginine biosynthesis</keyword>
<keyword id="KW-0963">Cytoplasm</keyword>
<keyword id="KW-0456">Lyase</keyword>
<keyword id="KW-1185">Reference proteome</keyword>
<evidence type="ECO:0000255" key="1">
    <source>
        <dbReference type="HAMAP-Rule" id="MF_00006"/>
    </source>
</evidence>
<sequence>MSKDKLWGGRFTQPTDKFVEEFTASIDFDKRLYHQDIRGSIAHARMLGKQRIIPMEDVEKIVHGLQEILDQIEAGKFDFSISLEDIHMNIESRLSAKIGEAGKRLHTGRSRNDQVALDIRLYLRDELVEISAYLDLLVDSLLTQAEKNIDVIMPGYTHLQTAQPILFAHHMLAYVEMFKRDKGRMEDCLKRTNILPLGAGALAGTTFPIDREHVAELLDFPEVTRNSLDSVSDRDFALEFLADASILMMHLSRFSEELILWSTSEFKFIDLSDGFCTGSSIMPQKKNPDVPELVRGKTGRVYGNLMALLTVMKSLPLAYNKDMQEDKEPLFDTIDTVKGSLKIFADMIREMQVNTDTMRNAAAKGFSTATDVADYLVRKGMPFRDAHEVVGKSVAYCIANKKDLPELAIEEWKGFSPMIDTDIYEAITLEASVNARRATGGTSLEGVKREIARVRAGK</sequence>
<feature type="chain" id="PRO_1000116325" description="Argininosuccinate lyase">
    <location>
        <begin position="1"/>
        <end position="458"/>
    </location>
</feature>
<protein>
    <recommendedName>
        <fullName evidence="1">Argininosuccinate lyase</fullName>
        <shortName evidence="1">ASAL</shortName>
        <ecNumber evidence="1">4.3.2.1</ecNumber>
    </recommendedName>
    <alternativeName>
        <fullName evidence="1">Arginosuccinase</fullName>
    </alternativeName>
</protein>
<name>ARLY_GEODF</name>
<gene>
    <name evidence="1" type="primary">argH</name>
    <name type="ordered locus">Geob_1127</name>
</gene>